<accession>P58463</accession>
<accession>Q6PD37</accession>
<accession>Q8C4F0</accession>
<accession>Q8R441</accession>
<sequence>MMQESATETISNSSMNQNGMSTLSSQLDAGSRDGRSSGDTSSEVSTVELLHLQQQQALQAARQLLLQQQTSGLKSPKSSEKQRPLQVPVSVAMMTPQVITPQQMQQILQQQVLSPQQLQALLQQQQAVMLQQQQLQEFYKKQQEQLHLQLLQQQQQQQQQQQQQQQQQQQQQQQQQQQQQQQQQQQQQQQQHPGKQAKEQQQQQQQQQLAAQQLVFQQQLLQMQQLQQQQHLLSLQRQGLISIPPGQAALPVQSLPQAGLSPAEIQQLWKEVTGVHSMEDNGIKHGGLDLTTNNSSSTTSSTTSKASPPITHHSIVNGQSSVLNARRDSSSHEETGASHTLYGHGVCKWPGCESICEDFGQFLKHLNNEHALDDRSTAQCRVQMQVVQQLEIQLSKERERLQAMMTHLHMRPSEPKPSPKPLNLVSSVTMSKNMLETSPQSLPQTPTTPTAPVTPITQGPSVITPASVPNVGAIRRRHSDKYNIPMSSEIAPNYEFYKNADVRPPFTYATLIRQAIMESSDRQLTLNEIYSWFTRTFAYFRRNAATWKNAVRHNLSLHKCFVRVENVKGAVWTVDEVEYQKRRSQKITGSPTLVKNIPTSLGYGAALNASLQAALAESSLPLLSNPGLINNASSGLLQAVHEDLNGSLDHIDSNGNSSPGCSPQPHIHSIHVKEEPVIAEDEDCPMSLVTTANHSPELEDDREIEEEPLSEDLE</sequence>
<evidence type="ECO:0000250" key="1">
    <source>
        <dbReference type="UniProtKB" id="O15409"/>
    </source>
</evidence>
<evidence type="ECO:0000255" key="2">
    <source>
        <dbReference type="PROSITE-ProRule" id="PRU00089"/>
    </source>
</evidence>
<evidence type="ECO:0000256" key="3">
    <source>
        <dbReference type="SAM" id="MobiDB-lite"/>
    </source>
</evidence>
<evidence type="ECO:0000269" key="4">
    <source>
    </source>
</evidence>
<evidence type="ECO:0000269" key="5">
    <source>
    </source>
</evidence>
<evidence type="ECO:0000269" key="6">
    <source>
    </source>
</evidence>
<evidence type="ECO:0000269" key="7">
    <source>
    </source>
</evidence>
<evidence type="ECO:0000303" key="8">
    <source>
    </source>
</evidence>
<evidence type="ECO:0000305" key="9"/>
<protein>
    <recommendedName>
        <fullName>Forkhead box protein P2</fullName>
    </recommendedName>
</protein>
<dbReference type="EMBL" id="AF339106">
    <property type="protein sequence ID" value="AAK69651.1"/>
    <property type="molecule type" value="mRNA"/>
</dbReference>
<dbReference type="EMBL" id="AY079003">
    <property type="protein sequence ID" value="AAL85482.1"/>
    <property type="molecule type" value="mRNA"/>
</dbReference>
<dbReference type="EMBL" id="AK082361">
    <property type="protein sequence ID" value="BAC38477.1"/>
    <property type="molecule type" value="mRNA"/>
</dbReference>
<dbReference type="EMBL" id="BC058960">
    <property type="protein sequence ID" value="AAH58960.1"/>
    <property type="molecule type" value="mRNA"/>
</dbReference>
<dbReference type="EMBL" id="BC062926">
    <property type="protein sequence ID" value="AAH62926.1"/>
    <property type="molecule type" value="mRNA"/>
</dbReference>
<dbReference type="CCDS" id="CCDS19918.1">
    <molecule id="P58463-1"/>
</dbReference>
<dbReference type="CCDS" id="CCDS71726.1">
    <molecule id="P58463-2"/>
</dbReference>
<dbReference type="RefSeq" id="NP_001273536.1">
    <molecule id="P58463-2"/>
    <property type="nucleotide sequence ID" value="NM_001286607.1"/>
</dbReference>
<dbReference type="RefSeq" id="NP_444472.2">
    <molecule id="P58463-1"/>
    <property type="nucleotide sequence ID" value="NM_053242.4"/>
</dbReference>
<dbReference type="RefSeq" id="NP_997600.1">
    <molecule id="P58463-1"/>
    <property type="nucleotide sequence ID" value="NM_212435.1"/>
</dbReference>
<dbReference type="SMR" id="P58463"/>
<dbReference type="BioGRID" id="227578">
    <property type="interactions" value="3"/>
</dbReference>
<dbReference type="FunCoup" id="P58463">
    <property type="interactions" value="1687"/>
</dbReference>
<dbReference type="IntAct" id="P58463">
    <property type="interactions" value="1"/>
</dbReference>
<dbReference type="STRING" id="10090.ENSMUSP00000111137"/>
<dbReference type="iPTMnet" id="P58463"/>
<dbReference type="PhosphoSitePlus" id="P58463"/>
<dbReference type="PaxDb" id="10090-ENSMUSP00000031545"/>
<dbReference type="ProteomicsDB" id="271601">
    <molecule id="P58463-1"/>
</dbReference>
<dbReference type="ProteomicsDB" id="271602">
    <molecule id="P58463-2"/>
</dbReference>
<dbReference type="Antibodypedia" id="672">
    <property type="antibodies" value="468 antibodies from 39 providers"/>
</dbReference>
<dbReference type="DNASU" id="114142"/>
<dbReference type="Ensembl" id="ENSMUST00000031545.14">
    <molecule id="P58463-1"/>
    <property type="protein sequence ID" value="ENSMUSP00000031545.8"/>
    <property type="gene ID" value="ENSMUSG00000029563.17"/>
</dbReference>
<dbReference type="Ensembl" id="ENSMUST00000115472.8">
    <molecule id="P58463-2"/>
    <property type="protein sequence ID" value="ENSMUSP00000111132.2"/>
    <property type="gene ID" value="ENSMUSG00000029563.17"/>
</dbReference>
<dbReference type="Ensembl" id="ENSMUST00000115477.8">
    <molecule id="P58463-1"/>
    <property type="protein sequence ID" value="ENSMUSP00000111137.2"/>
    <property type="gene ID" value="ENSMUSG00000029563.17"/>
</dbReference>
<dbReference type="GeneID" id="114142"/>
<dbReference type="KEGG" id="mmu:114142"/>
<dbReference type="UCSC" id="uc009ayy.1">
    <molecule id="P58463-1"/>
    <property type="organism name" value="mouse"/>
</dbReference>
<dbReference type="UCSC" id="uc012eie.1">
    <molecule id="P58463-2"/>
    <property type="organism name" value="mouse"/>
</dbReference>
<dbReference type="AGR" id="MGI:2148705"/>
<dbReference type="CTD" id="93986"/>
<dbReference type="MGI" id="MGI:2148705">
    <property type="gene designation" value="Foxp2"/>
</dbReference>
<dbReference type="VEuPathDB" id="HostDB:ENSMUSG00000029563"/>
<dbReference type="eggNOG" id="KOG4385">
    <property type="taxonomic scope" value="Eukaryota"/>
</dbReference>
<dbReference type="GeneTree" id="ENSGT00940000155480"/>
<dbReference type="HOGENOM" id="CLU_019502_3_1_1"/>
<dbReference type="InParanoid" id="P58463"/>
<dbReference type="OMA" id="REYPESH"/>
<dbReference type="PhylomeDB" id="P58463"/>
<dbReference type="TreeFam" id="TF326978"/>
<dbReference type="BioGRID-ORCS" id="114142">
    <property type="hits" value="3 hits in 82 CRISPR screens"/>
</dbReference>
<dbReference type="ChiTaRS" id="Foxp2">
    <property type="organism name" value="mouse"/>
</dbReference>
<dbReference type="PRO" id="PR:P58463"/>
<dbReference type="Proteomes" id="UP000000589">
    <property type="component" value="Chromosome 6"/>
</dbReference>
<dbReference type="RNAct" id="P58463">
    <property type="molecule type" value="protein"/>
</dbReference>
<dbReference type="Bgee" id="ENSMUSG00000029563">
    <property type="expression patterns" value="Expressed in olfactory tubercle and 290 other cell types or tissues"/>
</dbReference>
<dbReference type="ExpressionAtlas" id="P58463">
    <property type="expression patterns" value="baseline and differential"/>
</dbReference>
<dbReference type="GO" id="GO:0005634">
    <property type="term" value="C:nucleus"/>
    <property type="evidence" value="ECO:0000314"/>
    <property type="project" value="MGI"/>
</dbReference>
<dbReference type="GO" id="GO:0003677">
    <property type="term" value="F:DNA binding"/>
    <property type="evidence" value="ECO:0000314"/>
    <property type="project" value="MGI"/>
</dbReference>
<dbReference type="GO" id="GO:0003700">
    <property type="term" value="F:DNA-binding transcription factor activity"/>
    <property type="evidence" value="ECO:0000314"/>
    <property type="project" value="MGI"/>
</dbReference>
<dbReference type="GO" id="GO:0001227">
    <property type="term" value="F:DNA-binding transcription repressor activity, RNA polymerase II-specific"/>
    <property type="evidence" value="ECO:0000315"/>
    <property type="project" value="NTNU_SB"/>
</dbReference>
<dbReference type="GO" id="GO:0042802">
    <property type="term" value="F:identical protein binding"/>
    <property type="evidence" value="ECO:0000353"/>
    <property type="project" value="MGI"/>
</dbReference>
<dbReference type="GO" id="GO:0042803">
    <property type="term" value="F:protein homodimerization activity"/>
    <property type="evidence" value="ECO:0000250"/>
    <property type="project" value="UniProtKB"/>
</dbReference>
<dbReference type="GO" id="GO:0000978">
    <property type="term" value="F:RNA polymerase II cis-regulatory region sequence-specific DNA binding"/>
    <property type="evidence" value="ECO:0000315"/>
    <property type="project" value="NTNU_SB"/>
</dbReference>
<dbReference type="GO" id="GO:0001221">
    <property type="term" value="F:transcription coregulator binding"/>
    <property type="evidence" value="ECO:0000353"/>
    <property type="project" value="UniProtKB"/>
</dbReference>
<dbReference type="GO" id="GO:0008270">
    <property type="term" value="F:zinc ion binding"/>
    <property type="evidence" value="ECO:0007669"/>
    <property type="project" value="UniProtKB-KW"/>
</dbReference>
<dbReference type="GO" id="GO:0043010">
    <property type="term" value="P:camera-type eye development"/>
    <property type="evidence" value="ECO:0000315"/>
    <property type="project" value="MGI"/>
</dbReference>
<dbReference type="GO" id="GO:0021757">
    <property type="term" value="P:caudate nucleus development"/>
    <property type="evidence" value="ECO:0000250"/>
    <property type="project" value="UniProtKB"/>
</dbReference>
<dbReference type="GO" id="GO:0021702">
    <property type="term" value="P:cerebellar Purkinje cell differentiation"/>
    <property type="evidence" value="ECO:0000315"/>
    <property type="project" value="MGI"/>
</dbReference>
<dbReference type="GO" id="GO:0021549">
    <property type="term" value="P:cerebellum development"/>
    <property type="evidence" value="ECO:0000315"/>
    <property type="project" value="MGI"/>
</dbReference>
<dbReference type="GO" id="GO:0021987">
    <property type="term" value="P:cerebral cortex development"/>
    <property type="evidence" value="ECO:0007669"/>
    <property type="project" value="Ensembl"/>
</dbReference>
<dbReference type="GO" id="GO:0060502">
    <property type="term" value="P:epithelial cell proliferation involved in lung morphogenesis"/>
    <property type="evidence" value="ECO:0000316"/>
    <property type="project" value="MGI"/>
</dbReference>
<dbReference type="GO" id="GO:0010467">
    <property type="term" value="P:gene expression"/>
    <property type="evidence" value="ECO:0000315"/>
    <property type="project" value="MGI"/>
</dbReference>
<dbReference type="GO" id="GO:0048286">
    <property type="term" value="P:lung alveolus development"/>
    <property type="evidence" value="ECO:0000315"/>
    <property type="project" value="MGI"/>
</dbReference>
<dbReference type="GO" id="GO:0030324">
    <property type="term" value="P:lung development"/>
    <property type="evidence" value="ECO:0000316"/>
    <property type="project" value="MGI"/>
</dbReference>
<dbReference type="GO" id="GO:0045892">
    <property type="term" value="P:negative regulation of DNA-templated transcription"/>
    <property type="evidence" value="ECO:0000314"/>
    <property type="project" value="MGI"/>
</dbReference>
<dbReference type="GO" id="GO:0000122">
    <property type="term" value="P:negative regulation of transcription by RNA polymerase II"/>
    <property type="evidence" value="ECO:0000314"/>
    <property type="project" value="MGI"/>
</dbReference>
<dbReference type="GO" id="GO:0050679">
    <property type="term" value="P:positive regulation of epithelial cell proliferation"/>
    <property type="evidence" value="ECO:0000316"/>
    <property type="project" value="MGI"/>
</dbReference>
<dbReference type="GO" id="GO:0060501">
    <property type="term" value="P:positive regulation of epithelial cell proliferation involved in lung morphogenesis"/>
    <property type="evidence" value="ECO:0000316"/>
    <property type="project" value="MGI"/>
</dbReference>
<dbReference type="GO" id="GO:0002053">
    <property type="term" value="P:positive regulation of mesenchymal cell proliferation"/>
    <property type="evidence" value="ECO:0000316"/>
    <property type="project" value="MGI"/>
</dbReference>
<dbReference type="GO" id="GO:0009791">
    <property type="term" value="P:post-embryonic development"/>
    <property type="evidence" value="ECO:0000315"/>
    <property type="project" value="MGI"/>
</dbReference>
<dbReference type="GO" id="GO:0021758">
    <property type="term" value="P:putamen development"/>
    <property type="evidence" value="ECO:0000250"/>
    <property type="project" value="UniProtKB"/>
</dbReference>
<dbReference type="GO" id="GO:0060013">
    <property type="term" value="P:righting reflex"/>
    <property type="evidence" value="ECO:0000315"/>
    <property type="project" value="MGI"/>
</dbReference>
<dbReference type="GO" id="GO:0007519">
    <property type="term" value="P:skeletal muscle tissue development"/>
    <property type="evidence" value="ECO:0000316"/>
    <property type="project" value="MGI"/>
</dbReference>
<dbReference type="GO" id="GO:0048745">
    <property type="term" value="P:smooth muscle tissue development"/>
    <property type="evidence" value="ECO:0000316"/>
    <property type="project" value="MGI"/>
</dbReference>
<dbReference type="GO" id="GO:0042297">
    <property type="term" value="P:vocal learning"/>
    <property type="evidence" value="ECO:0000315"/>
    <property type="project" value="MGI"/>
</dbReference>
<dbReference type="GO" id="GO:0071625">
    <property type="term" value="P:vocalization behavior"/>
    <property type="evidence" value="ECO:0000315"/>
    <property type="project" value="MGI"/>
</dbReference>
<dbReference type="CDD" id="cd20065">
    <property type="entry name" value="FH_FOXP2"/>
    <property type="match status" value="1"/>
</dbReference>
<dbReference type="FunFam" id="1.20.5.340:FF:000005">
    <property type="entry name" value="Forkhead box P1, isoform CRA_f"/>
    <property type="match status" value="1"/>
</dbReference>
<dbReference type="FunFam" id="1.10.10.10:FF:000010">
    <property type="entry name" value="Forkhead box P2 isoform B"/>
    <property type="match status" value="1"/>
</dbReference>
<dbReference type="Gene3D" id="1.20.5.340">
    <property type="match status" value="1"/>
</dbReference>
<dbReference type="Gene3D" id="1.10.10.10">
    <property type="entry name" value="Winged helix-like DNA-binding domain superfamily/Winged helix DNA-binding domain"/>
    <property type="match status" value="1"/>
</dbReference>
<dbReference type="InterPro" id="IPR047412">
    <property type="entry name" value="FH_FOXP1_P2"/>
</dbReference>
<dbReference type="InterPro" id="IPR001766">
    <property type="entry name" value="Fork_head_dom"/>
</dbReference>
<dbReference type="InterPro" id="IPR050998">
    <property type="entry name" value="FOXP"/>
</dbReference>
<dbReference type="InterPro" id="IPR032354">
    <property type="entry name" value="FOXP-CC"/>
</dbReference>
<dbReference type="InterPro" id="IPR030456">
    <property type="entry name" value="TF_fork_head_CS_2"/>
</dbReference>
<dbReference type="InterPro" id="IPR036388">
    <property type="entry name" value="WH-like_DNA-bd_sf"/>
</dbReference>
<dbReference type="InterPro" id="IPR036390">
    <property type="entry name" value="WH_DNA-bd_sf"/>
</dbReference>
<dbReference type="PANTHER" id="PTHR45796">
    <property type="entry name" value="FORKHEAD BOX P, ISOFORM C"/>
    <property type="match status" value="1"/>
</dbReference>
<dbReference type="PANTHER" id="PTHR45796:SF9">
    <property type="entry name" value="FORKHEAD BOX PROTEIN P2"/>
    <property type="match status" value="1"/>
</dbReference>
<dbReference type="Pfam" id="PF00250">
    <property type="entry name" value="Forkhead"/>
    <property type="match status" value="1"/>
</dbReference>
<dbReference type="Pfam" id="PF16159">
    <property type="entry name" value="FOXP-CC"/>
    <property type="match status" value="1"/>
</dbReference>
<dbReference type="PRINTS" id="PR00053">
    <property type="entry name" value="FORKHEAD"/>
</dbReference>
<dbReference type="SMART" id="SM00339">
    <property type="entry name" value="FH"/>
    <property type="match status" value="1"/>
</dbReference>
<dbReference type="SUPFAM" id="SSF46785">
    <property type="entry name" value="Winged helix' DNA-binding domain"/>
    <property type="match status" value="1"/>
</dbReference>
<dbReference type="PROSITE" id="PS00658">
    <property type="entry name" value="FORK_HEAD_2"/>
    <property type="match status" value="1"/>
</dbReference>
<dbReference type="PROSITE" id="PS50039">
    <property type="entry name" value="FORK_HEAD_3"/>
    <property type="match status" value="1"/>
</dbReference>
<dbReference type="PROSITE" id="PS00028">
    <property type="entry name" value="ZINC_FINGER_C2H2_1"/>
    <property type="match status" value="1"/>
</dbReference>
<feature type="chain" id="PRO_0000091882" description="Forkhead box protein P2">
    <location>
        <begin position="1"/>
        <end position="714"/>
    </location>
</feature>
<feature type="zinc finger region" description="C2H2-type">
    <location>
        <begin position="345"/>
        <end position="370"/>
    </location>
</feature>
<feature type="DNA-binding region" description="Fork-head" evidence="2">
    <location>
        <begin position="503"/>
        <end position="593"/>
    </location>
</feature>
<feature type="region of interest" description="Disordered" evidence="3">
    <location>
        <begin position="1"/>
        <end position="45"/>
    </location>
</feature>
<feature type="region of interest" description="Disordered" evidence="3">
    <location>
        <begin position="280"/>
        <end position="338"/>
    </location>
</feature>
<feature type="region of interest" description="Leucine-zipper">
    <location>
        <begin position="387"/>
        <end position="408"/>
    </location>
</feature>
<feature type="region of interest" description="CTBP1-binding">
    <location>
        <begin position="421"/>
        <end position="425"/>
    </location>
</feature>
<feature type="region of interest" description="Disordered" evidence="3">
    <location>
        <begin position="437"/>
        <end position="464"/>
    </location>
</feature>
<feature type="region of interest" description="Disordered" evidence="3">
    <location>
        <begin position="648"/>
        <end position="667"/>
    </location>
</feature>
<feature type="region of interest" description="Disordered" evidence="3">
    <location>
        <begin position="677"/>
        <end position="714"/>
    </location>
</feature>
<feature type="compositionally biased region" description="Polar residues" evidence="3">
    <location>
        <begin position="1"/>
        <end position="28"/>
    </location>
</feature>
<feature type="compositionally biased region" description="Low complexity" evidence="3">
    <location>
        <begin position="291"/>
        <end position="304"/>
    </location>
</feature>
<feature type="compositionally biased region" description="Polar residues" evidence="3">
    <location>
        <begin position="314"/>
        <end position="323"/>
    </location>
</feature>
<feature type="compositionally biased region" description="Basic and acidic residues" evidence="3">
    <location>
        <begin position="325"/>
        <end position="336"/>
    </location>
</feature>
<feature type="compositionally biased region" description="Low complexity" evidence="3">
    <location>
        <begin position="437"/>
        <end position="458"/>
    </location>
</feature>
<feature type="compositionally biased region" description="Acidic residues" evidence="3">
    <location>
        <begin position="698"/>
        <end position="714"/>
    </location>
</feature>
<feature type="splice variant" id="VSP_011540" description="In isoform 2." evidence="8">
    <location>
        <begin position="134"/>
        <end position="154"/>
    </location>
</feature>
<feature type="mutagenesis site" description="Loss of dimerization. Almost complete loss of DNA-binding. Reduced transcriptional repression activity." evidence="6">
    <location>
        <position position="399"/>
    </location>
</feature>
<feature type="mutagenesis site" description="Severely reduced transcriptional repression activity." evidence="6">
    <original>HL</original>
    <variation>AA</variation>
    <location>
        <begin position="407"/>
        <end position="408"/>
    </location>
</feature>
<feature type="mutagenesis site" description="Severely reduced transcriptional repression activity." evidence="6">
    <original>L</original>
    <variation>A</variation>
    <location>
        <position position="408"/>
    </location>
</feature>
<feature type="mutagenesis site" description="No significant effect on transcriptional repression activity." evidence="6">
    <original>PLNLV</original>
    <variation>AANAA</variation>
    <location>
        <begin position="421"/>
        <end position="425"/>
    </location>
</feature>
<feature type="mutagenesis site" description="No change in synaptic density." evidence="7">
    <original>R</original>
    <variation>H</variation>
    <location>
        <position position="552"/>
    </location>
</feature>
<feature type="sequence conflict" description="In Ref. 1; AAK69651." evidence="9" ref="1">
    <original>A</original>
    <variation>V</variation>
    <location>
        <position position="6"/>
    </location>
</feature>
<feature type="sequence conflict" description="In Ref. 1; AAK69651." evidence="9" ref="1">
    <original>N</original>
    <variation>S</variation>
    <location>
        <position position="543"/>
    </location>
</feature>
<feature type="sequence conflict" description="In Ref. 3; BAC38477." evidence="9" ref="3">
    <original>P</original>
    <variation>R</variation>
    <location>
        <position position="663"/>
    </location>
</feature>
<feature type="sequence conflict" description="In Ref. 3; BAC38477." evidence="9" ref="3">
    <original>E</original>
    <variation>D</variation>
    <location>
        <position position="675"/>
    </location>
</feature>
<proteinExistence type="evidence at protein level"/>
<gene>
    <name type="primary">Foxp2</name>
</gene>
<comment type="function">
    <text evidence="6 7">Transcriptional repressor that may play a role in the specification and differentiation of lung epithelium. May also play a role in developing neural, gastrointestinal and cardiovascular tissues. Can act with CTBP1 to synergistically repress transcription but CTPBP1 is not essential. Plays a role in synapse formation by regulating SRPX2 levels.</text>
</comment>
<comment type="subunit">
    <text evidence="1 6">Forms homodimers and heterodimers with FOXP1 and FOXP4. Dimerization is required for DNA-binding (By similarity). Interacts with CTBP1 (PubMed:14701752). Interacts with FOXP1 (By similarity). Interacts with TBR1 (By similarity). Interacts with ZMYM2 (By similarity).</text>
</comment>
<comment type="subcellular location">
    <subcellularLocation>
        <location evidence="9">Nucleus</location>
    </subcellularLocation>
</comment>
<comment type="alternative products">
    <event type="alternative splicing"/>
    <isoform>
        <id>P58463-1</id>
        <name>1</name>
        <sequence type="displayed"/>
    </isoform>
    <isoform>
        <id>P58463-2</id>
        <name>2</name>
        <sequence type="described" ref="VSP_011540"/>
    </isoform>
</comment>
<comment type="tissue specificity">
    <text>Highest expression in lung. Lower expression in spleen, skeletal muscle, brain, kidney and small intestine.</text>
</comment>
<comment type="developmental stage">
    <text evidence="4 5">Expressed in developing lung, neural, intestinal and cardiovascular tissues. Expressed at a high level in the distal airway epithelium and at a low level in the proximal airway epithelium at 12.5 dpc, and restricted to the distal airway epithelium by 14.5 dpc. In the spinal cord, at 12.5 dpc, expressed in a subset of interneurons dorsal to motor neurons. At 16.5 dpc, expression in the brain is observed in the inner intermediate zone of the neopallial cortex and in the developing cerebral hemispheres. In the gastrointestinal system, at 12.5 expressed in the outer mesodermal layer and in the intestinal epithelium. By 16.5 dpc, expression is restricted to the outer longitudinal muscle layer of the intestine and stomach. In the cardiovascular system, at 14.5 dpc, expressed in the outflow tract region of the developing heart. By 16.5 dpc, observed in the outflow tract and atrium, but not in the ventricles.</text>
</comment>
<comment type="domain">
    <text evidence="6">The leucine-zipper is required for dimerization and transcriptional repression.</text>
</comment>
<comment type="miscellaneous">
    <molecule>Isoform 2</molecule>
    <text evidence="9">May be due to a competing acceptor splice site.</text>
</comment>
<keyword id="KW-0025">Alternative splicing</keyword>
<keyword id="KW-0238">DNA-binding</keyword>
<keyword id="KW-0479">Metal-binding</keyword>
<keyword id="KW-0539">Nucleus</keyword>
<keyword id="KW-1185">Reference proteome</keyword>
<keyword id="KW-0678">Repressor</keyword>
<keyword id="KW-0804">Transcription</keyword>
<keyword id="KW-0805">Transcription regulation</keyword>
<keyword id="KW-0862">Zinc</keyword>
<keyword id="KW-0863">Zinc-finger</keyword>
<reference key="1">
    <citation type="journal article" date="2001" name="J. Biol. Chem.">
        <title>Characterization of a new subfamily of winged-helix/forkhead (Fox) genes that are expressed in the lung and act as transcriptional repressors.</title>
        <authorList>
            <person name="Shu W."/>
            <person name="Yang H."/>
            <person name="Zhang L."/>
            <person name="Lu M.M."/>
            <person name="Morrisey E.E."/>
        </authorList>
    </citation>
    <scope>NUCLEOTIDE SEQUENCE [MRNA] (ISOFORM 1)</scope>
    <scope>DEVELOPMENTAL STAGE</scope>
    <source>
        <strain>C57BL/6J</strain>
        <tissue>Lung</tissue>
    </source>
</reference>
<reference key="2">
    <citation type="journal article" date="2002" name="Nature">
        <title>Molecular evolution of FOXP2, a gene involved in speech and language.</title>
        <authorList>
            <person name="Enard W."/>
            <person name="Przeworski M."/>
            <person name="Fisher S.E."/>
            <person name="Lai C.S.L."/>
            <person name="Wiebe V."/>
            <person name="Kitano T."/>
            <person name="Monaco A.P."/>
            <person name="Paeaebo S."/>
        </authorList>
    </citation>
    <scope>NUCLEOTIDE SEQUENCE [MRNA] (ISOFORM 1)</scope>
    <source>
        <strain>BALB/cJ</strain>
    </source>
</reference>
<reference key="3">
    <citation type="journal article" date="2005" name="Science">
        <title>The transcriptional landscape of the mammalian genome.</title>
        <authorList>
            <person name="Carninci P."/>
            <person name="Kasukawa T."/>
            <person name="Katayama S."/>
            <person name="Gough J."/>
            <person name="Frith M.C."/>
            <person name="Maeda N."/>
            <person name="Oyama R."/>
            <person name="Ravasi T."/>
            <person name="Lenhard B."/>
            <person name="Wells C."/>
            <person name="Kodzius R."/>
            <person name="Shimokawa K."/>
            <person name="Bajic V.B."/>
            <person name="Brenner S.E."/>
            <person name="Batalov S."/>
            <person name="Forrest A.R."/>
            <person name="Zavolan M."/>
            <person name="Davis M.J."/>
            <person name="Wilming L.G."/>
            <person name="Aidinis V."/>
            <person name="Allen J.E."/>
            <person name="Ambesi-Impiombato A."/>
            <person name="Apweiler R."/>
            <person name="Aturaliya R.N."/>
            <person name="Bailey T.L."/>
            <person name="Bansal M."/>
            <person name="Baxter L."/>
            <person name="Beisel K.W."/>
            <person name="Bersano T."/>
            <person name="Bono H."/>
            <person name="Chalk A.M."/>
            <person name="Chiu K.P."/>
            <person name="Choudhary V."/>
            <person name="Christoffels A."/>
            <person name="Clutterbuck D.R."/>
            <person name="Crowe M.L."/>
            <person name="Dalla E."/>
            <person name="Dalrymple B.P."/>
            <person name="de Bono B."/>
            <person name="Della Gatta G."/>
            <person name="di Bernardo D."/>
            <person name="Down T."/>
            <person name="Engstrom P."/>
            <person name="Fagiolini M."/>
            <person name="Faulkner G."/>
            <person name="Fletcher C.F."/>
            <person name="Fukushima T."/>
            <person name="Furuno M."/>
            <person name="Futaki S."/>
            <person name="Gariboldi M."/>
            <person name="Georgii-Hemming P."/>
            <person name="Gingeras T.R."/>
            <person name="Gojobori T."/>
            <person name="Green R.E."/>
            <person name="Gustincich S."/>
            <person name="Harbers M."/>
            <person name="Hayashi Y."/>
            <person name="Hensch T.K."/>
            <person name="Hirokawa N."/>
            <person name="Hill D."/>
            <person name="Huminiecki L."/>
            <person name="Iacono M."/>
            <person name="Ikeo K."/>
            <person name="Iwama A."/>
            <person name="Ishikawa T."/>
            <person name="Jakt M."/>
            <person name="Kanapin A."/>
            <person name="Katoh M."/>
            <person name="Kawasawa Y."/>
            <person name="Kelso J."/>
            <person name="Kitamura H."/>
            <person name="Kitano H."/>
            <person name="Kollias G."/>
            <person name="Krishnan S.P."/>
            <person name="Kruger A."/>
            <person name="Kummerfeld S.K."/>
            <person name="Kurochkin I.V."/>
            <person name="Lareau L.F."/>
            <person name="Lazarevic D."/>
            <person name="Lipovich L."/>
            <person name="Liu J."/>
            <person name="Liuni S."/>
            <person name="McWilliam S."/>
            <person name="Madan Babu M."/>
            <person name="Madera M."/>
            <person name="Marchionni L."/>
            <person name="Matsuda H."/>
            <person name="Matsuzawa S."/>
            <person name="Miki H."/>
            <person name="Mignone F."/>
            <person name="Miyake S."/>
            <person name="Morris K."/>
            <person name="Mottagui-Tabar S."/>
            <person name="Mulder N."/>
            <person name="Nakano N."/>
            <person name="Nakauchi H."/>
            <person name="Ng P."/>
            <person name="Nilsson R."/>
            <person name="Nishiguchi S."/>
            <person name="Nishikawa S."/>
            <person name="Nori F."/>
            <person name="Ohara O."/>
            <person name="Okazaki Y."/>
            <person name="Orlando V."/>
            <person name="Pang K.C."/>
            <person name="Pavan W.J."/>
            <person name="Pavesi G."/>
            <person name="Pesole G."/>
            <person name="Petrovsky N."/>
            <person name="Piazza S."/>
            <person name="Reed J."/>
            <person name="Reid J.F."/>
            <person name="Ring B.Z."/>
            <person name="Ringwald M."/>
            <person name="Rost B."/>
            <person name="Ruan Y."/>
            <person name="Salzberg S.L."/>
            <person name="Sandelin A."/>
            <person name="Schneider C."/>
            <person name="Schoenbach C."/>
            <person name="Sekiguchi K."/>
            <person name="Semple C.A."/>
            <person name="Seno S."/>
            <person name="Sessa L."/>
            <person name="Sheng Y."/>
            <person name="Shibata Y."/>
            <person name="Shimada H."/>
            <person name="Shimada K."/>
            <person name="Silva D."/>
            <person name="Sinclair B."/>
            <person name="Sperling S."/>
            <person name="Stupka E."/>
            <person name="Sugiura K."/>
            <person name="Sultana R."/>
            <person name="Takenaka Y."/>
            <person name="Taki K."/>
            <person name="Tammoja K."/>
            <person name="Tan S.L."/>
            <person name="Tang S."/>
            <person name="Taylor M.S."/>
            <person name="Tegner J."/>
            <person name="Teichmann S.A."/>
            <person name="Ueda H.R."/>
            <person name="van Nimwegen E."/>
            <person name="Verardo R."/>
            <person name="Wei C.L."/>
            <person name="Yagi K."/>
            <person name="Yamanishi H."/>
            <person name="Zabarovsky E."/>
            <person name="Zhu S."/>
            <person name="Zimmer A."/>
            <person name="Hide W."/>
            <person name="Bult C."/>
            <person name="Grimmond S.M."/>
            <person name="Teasdale R.D."/>
            <person name="Liu E.T."/>
            <person name="Brusic V."/>
            <person name="Quackenbush J."/>
            <person name="Wahlestedt C."/>
            <person name="Mattick J.S."/>
            <person name="Hume D.A."/>
            <person name="Kai C."/>
            <person name="Sasaki D."/>
            <person name="Tomaru Y."/>
            <person name="Fukuda S."/>
            <person name="Kanamori-Katayama M."/>
            <person name="Suzuki M."/>
            <person name="Aoki J."/>
            <person name="Arakawa T."/>
            <person name="Iida J."/>
            <person name="Imamura K."/>
            <person name="Itoh M."/>
            <person name="Kato T."/>
            <person name="Kawaji H."/>
            <person name="Kawagashira N."/>
            <person name="Kawashima T."/>
            <person name="Kojima M."/>
            <person name="Kondo S."/>
            <person name="Konno H."/>
            <person name="Nakano K."/>
            <person name="Ninomiya N."/>
            <person name="Nishio T."/>
            <person name="Okada M."/>
            <person name="Plessy C."/>
            <person name="Shibata K."/>
            <person name="Shiraki T."/>
            <person name="Suzuki S."/>
            <person name="Tagami M."/>
            <person name="Waki K."/>
            <person name="Watahiki A."/>
            <person name="Okamura-Oho Y."/>
            <person name="Suzuki H."/>
            <person name="Kawai J."/>
            <person name="Hayashizaki Y."/>
        </authorList>
    </citation>
    <scope>NUCLEOTIDE SEQUENCE [LARGE SCALE MRNA] (ISOFORM 1)</scope>
    <source>
        <strain>C57BL/6J</strain>
        <tissue>Cerebellum</tissue>
    </source>
</reference>
<reference key="4">
    <citation type="journal article" date="2004" name="Genome Res.">
        <title>The status, quality, and expansion of the NIH full-length cDNA project: the Mammalian Gene Collection (MGC).</title>
        <authorList>
            <consortium name="The MGC Project Team"/>
        </authorList>
    </citation>
    <scope>NUCLEOTIDE SEQUENCE [LARGE SCALE MRNA] (ISOFORMS 1 AND 2)</scope>
    <source>
        <strain>C57BL/6J</strain>
        <tissue>Brain</tissue>
    </source>
</reference>
<reference key="5">
    <citation type="journal article" date="2002" name="Mech. Dev.">
        <title>Foxp4: a novel member of the Foxp subfamily of winged-helix genes co-expressed with Foxp1 and Foxp2 in pulmonary and gut tissues.</title>
        <authorList>
            <person name="Lu M.M."/>
            <person name="Li S."/>
            <person name="Yang H."/>
            <person name="Morrisey E.E."/>
        </authorList>
    </citation>
    <scope>DEVELOPMENTAL STAGE</scope>
</reference>
<reference key="6">
    <citation type="journal article" date="2004" name="Mol. Cell. Biol.">
        <title>Transcriptional and DNA binding activity of the Foxp1/2/4 family is modulated by heterotypic and homotypic protein interactions.</title>
        <authorList>
            <person name="Li S."/>
            <person name="Weidenfeld J."/>
            <person name="Morrisey E.E."/>
        </authorList>
    </citation>
    <scope>FUNCTION</scope>
    <scope>DIMERIZATION</scope>
    <scope>INTERACTION WITH CTBP1</scope>
    <scope>DOMAIN</scope>
    <scope>MUTAGENESIS OF GLU-399; 407-HIS-LEU-408; LEU-408 AND 421-PRO--VAL-425</scope>
</reference>
<reference key="7">
    <citation type="journal article" date="2013" name="Science">
        <title>The human language-associated gene SRPX2 regulates synapse formation and vocalization in mice.</title>
        <authorList>
            <person name="Sia G.M."/>
            <person name="Clem R.L."/>
            <person name="Huganir R.L."/>
        </authorList>
    </citation>
    <scope>FUNCTION</scope>
    <scope>MUTAGENESIS OF ARG-552</scope>
</reference>
<organism>
    <name type="scientific">Mus musculus</name>
    <name type="common">Mouse</name>
    <dbReference type="NCBI Taxonomy" id="10090"/>
    <lineage>
        <taxon>Eukaryota</taxon>
        <taxon>Metazoa</taxon>
        <taxon>Chordata</taxon>
        <taxon>Craniata</taxon>
        <taxon>Vertebrata</taxon>
        <taxon>Euteleostomi</taxon>
        <taxon>Mammalia</taxon>
        <taxon>Eutheria</taxon>
        <taxon>Euarchontoglires</taxon>
        <taxon>Glires</taxon>
        <taxon>Rodentia</taxon>
        <taxon>Myomorpha</taxon>
        <taxon>Muroidea</taxon>
        <taxon>Muridae</taxon>
        <taxon>Murinae</taxon>
        <taxon>Mus</taxon>
        <taxon>Mus</taxon>
    </lineage>
</organism>
<name>FOXP2_MOUSE</name>